<reference key="1">
    <citation type="submission" date="2006-08" db="EMBL/GenBank/DDBJ databases">
        <title>Complete sequence of Alkalilimnicola ehrilichei MLHE-1.</title>
        <authorList>
            <person name="Copeland A."/>
            <person name="Lucas S."/>
            <person name="Lapidus A."/>
            <person name="Barry K."/>
            <person name="Detter J.C."/>
            <person name="Glavina del Rio T."/>
            <person name="Hammon N."/>
            <person name="Israni S."/>
            <person name="Dalin E."/>
            <person name="Tice H."/>
            <person name="Pitluck S."/>
            <person name="Sims D."/>
            <person name="Brettin T."/>
            <person name="Bruce D."/>
            <person name="Han C."/>
            <person name="Tapia R."/>
            <person name="Gilna P."/>
            <person name="Schmutz J."/>
            <person name="Larimer F."/>
            <person name="Land M."/>
            <person name="Hauser L."/>
            <person name="Kyrpides N."/>
            <person name="Mikhailova N."/>
            <person name="Oremland R.S."/>
            <person name="Hoeft S.E."/>
            <person name="Switzer-Blum J."/>
            <person name="Kulp T."/>
            <person name="King G."/>
            <person name="Tabita R."/>
            <person name="Witte B."/>
            <person name="Santini J.M."/>
            <person name="Basu P."/>
            <person name="Hollibaugh J.T."/>
            <person name="Xie G."/>
            <person name="Stolz J.F."/>
            <person name="Richardson P."/>
        </authorList>
    </citation>
    <scope>NUCLEOTIDE SEQUENCE [LARGE SCALE GENOMIC DNA]</scope>
    <source>
        <strain>ATCC BAA-1101 / DSM 17681 / MLHE-1</strain>
    </source>
</reference>
<keyword id="KW-0963">Cytoplasm</keyword>
<keyword id="KW-0444">Lipid biosynthesis</keyword>
<keyword id="KW-0443">Lipid metabolism</keyword>
<keyword id="KW-0594">Phospholipid biosynthesis</keyword>
<keyword id="KW-1208">Phospholipid metabolism</keyword>
<keyword id="KW-1185">Reference proteome</keyword>
<keyword id="KW-0808">Transferase</keyword>
<proteinExistence type="inferred from homology"/>
<organism>
    <name type="scientific">Alkalilimnicola ehrlichii (strain ATCC BAA-1101 / DSM 17681 / MLHE-1)</name>
    <dbReference type="NCBI Taxonomy" id="187272"/>
    <lineage>
        <taxon>Bacteria</taxon>
        <taxon>Pseudomonadati</taxon>
        <taxon>Pseudomonadota</taxon>
        <taxon>Gammaproteobacteria</taxon>
        <taxon>Chromatiales</taxon>
        <taxon>Ectothiorhodospiraceae</taxon>
        <taxon>Alkalilimnicola</taxon>
    </lineage>
</organism>
<sequence>MTESVTISLDAMGGDHGPDVVAPAALAALARNPALRLILVGQAEPVRQALQRHGGQESERLWVHPASEVVAMDEPPSQALRTKKDSSMRVSIQLVKQGEADASISAGNTGALMATARYVLKTLPGIDRPAIMSTIPTKGGYAHMLDLGANVDCTAEHLFQFAVMGSVCAEAIDGVAQPRVGLLNIGEEEIKGNDQVKRACQMLTDSPLNYVGYVEGDGIFKGLADVVVCDGFVGNVALKSSEGVAGLIAHYLRAEFQRNLFTRLAGLIALPVLRSLRGRIDPRQYNGASLLGLRGIVLKSHGGADAFAFGRAIETAVLEVRKGVPRMIDQRLESLLAAKESP</sequence>
<name>PLSX_ALKEH</name>
<protein>
    <recommendedName>
        <fullName evidence="1">Phosphate acyltransferase</fullName>
        <ecNumber evidence="1">2.3.1.274</ecNumber>
    </recommendedName>
    <alternativeName>
        <fullName evidence="1">Acyl-ACP phosphotransacylase</fullName>
    </alternativeName>
    <alternativeName>
        <fullName evidence="1">Acyl-[acyl-carrier-protein]--phosphate acyltransferase</fullName>
    </alternativeName>
    <alternativeName>
        <fullName evidence="1">Phosphate-acyl-ACP acyltransferase</fullName>
    </alternativeName>
</protein>
<comment type="function">
    <text evidence="1">Catalyzes the reversible formation of acyl-phosphate (acyl-PO(4)) from acyl-[acyl-carrier-protein] (acyl-ACP). This enzyme utilizes acyl-ACP as fatty acyl donor, but not acyl-CoA.</text>
</comment>
<comment type="catalytic activity">
    <reaction evidence="1">
        <text>a fatty acyl-[ACP] + phosphate = an acyl phosphate + holo-[ACP]</text>
        <dbReference type="Rhea" id="RHEA:42292"/>
        <dbReference type="Rhea" id="RHEA-COMP:9685"/>
        <dbReference type="Rhea" id="RHEA-COMP:14125"/>
        <dbReference type="ChEBI" id="CHEBI:43474"/>
        <dbReference type="ChEBI" id="CHEBI:59918"/>
        <dbReference type="ChEBI" id="CHEBI:64479"/>
        <dbReference type="ChEBI" id="CHEBI:138651"/>
        <dbReference type="EC" id="2.3.1.274"/>
    </reaction>
</comment>
<comment type="pathway">
    <text evidence="1">Lipid metabolism; phospholipid metabolism.</text>
</comment>
<comment type="subunit">
    <text evidence="1">Homodimer. Probably interacts with PlsY.</text>
</comment>
<comment type="subcellular location">
    <subcellularLocation>
        <location evidence="1">Cytoplasm</location>
    </subcellularLocation>
    <text evidence="1">Associated with the membrane possibly through PlsY.</text>
</comment>
<comment type="similarity">
    <text evidence="1">Belongs to the PlsX family.</text>
</comment>
<evidence type="ECO:0000255" key="1">
    <source>
        <dbReference type="HAMAP-Rule" id="MF_00019"/>
    </source>
</evidence>
<gene>
    <name evidence="1" type="primary">plsX</name>
    <name type="ordered locus">Mlg_1424</name>
</gene>
<dbReference type="EC" id="2.3.1.274" evidence="1"/>
<dbReference type="EMBL" id="CP000453">
    <property type="protein sequence ID" value="ABI56773.1"/>
    <property type="molecule type" value="Genomic_DNA"/>
</dbReference>
<dbReference type="RefSeq" id="WP_011629168.1">
    <property type="nucleotide sequence ID" value="NC_008340.1"/>
</dbReference>
<dbReference type="SMR" id="Q0A8R4"/>
<dbReference type="KEGG" id="aeh:Mlg_1424"/>
<dbReference type="eggNOG" id="COG0416">
    <property type="taxonomic scope" value="Bacteria"/>
</dbReference>
<dbReference type="HOGENOM" id="CLU_039379_1_0_6"/>
<dbReference type="OrthoDB" id="9806408at2"/>
<dbReference type="UniPathway" id="UPA00085"/>
<dbReference type="Proteomes" id="UP000001962">
    <property type="component" value="Chromosome"/>
</dbReference>
<dbReference type="GO" id="GO:0005737">
    <property type="term" value="C:cytoplasm"/>
    <property type="evidence" value="ECO:0007669"/>
    <property type="project" value="UniProtKB-SubCell"/>
</dbReference>
<dbReference type="GO" id="GO:0043811">
    <property type="term" value="F:phosphate:acyl-[acyl carrier protein] acyltransferase activity"/>
    <property type="evidence" value="ECO:0007669"/>
    <property type="project" value="UniProtKB-UniRule"/>
</dbReference>
<dbReference type="GO" id="GO:0006633">
    <property type="term" value="P:fatty acid biosynthetic process"/>
    <property type="evidence" value="ECO:0007669"/>
    <property type="project" value="UniProtKB-UniRule"/>
</dbReference>
<dbReference type="GO" id="GO:0008654">
    <property type="term" value="P:phospholipid biosynthetic process"/>
    <property type="evidence" value="ECO:0007669"/>
    <property type="project" value="UniProtKB-KW"/>
</dbReference>
<dbReference type="Gene3D" id="3.40.718.10">
    <property type="entry name" value="Isopropylmalate Dehydrogenase"/>
    <property type="match status" value="1"/>
</dbReference>
<dbReference type="HAMAP" id="MF_00019">
    <property type="entry name" value="PlsX"/>
    <property type="match status" value="1"/>
</dbReference>
<dbReference type="InterPro" id="IPR003664">
    <property type="entry name" value="FA_synthesis"/>
</dbReference>
<dbReference type="InterPro" id="IPR012281">
    <property type="entry name" value="Phospholipid_synth_PlsX-like"/>
</dbReference>
<dbReference type="NCBIfam" id="TIGR00182">
    <property type="entry name" value="plsX"/>
    <property type="match status" value="1"/>
</dbReference>
<dbReference type="PANTHER" id="PTHR30100">
    <property type="entry name" value="FATTY ACID/PHOSPHOLIPID SYNTHESIS PROTEIN PLSX"/>
    <property type="match status" value="1"/>
</dbReference>
<dbReference type="PANTHER" id="PTHR30100:SF1">
    <property type="entry name" value="PHOSPHATE ACYLTRANSFERASE"/>
    <property type="match status" value="1"/>
</dbReference>
<dbReference type="Pfam" id="PF02504">
    <property type="entry name" value="FA_synthesis"/>
    <property type="match status" value="1"/>
</dbReference>
<dbReference type="PIRSF" id="PIRSF002465">
    <property type="entry name" value="Phsphlp_syn_PlsX"/>
    <property type="match status" value="1"/>
</dbReference>
<dbReference type="SUPFAM" id="SSF53659">
    <property type="entry name" value="Isocitrate/Isopropylmalate dehydrogenase-like"/>
    <property type="match status" value="1"/>
</dbReference>
<feature type="chain" id="PRO_0000329207" description="Phosphate acyltransferase">
    <location>
        <begin position="1"/>
        <end position="342"/>
    </location>
</feature>
<accession>Q0A8R4</accession>